<evidence type="ECO:0000255" key="1">
    <source>
        <dbReference type="HAMAP-Rule" id="MF_00340"/>
    </source>
</evidence>
<evidence type="ECO:0000305" key="2"/>
<gene>
    <name evidence="1" type="primary">rpmF</name>
    <name type="ordered locus">ABC2371</name>
</gene>
<comment type="similarity">
    <text evidence="1">Belongs to the bacterial ribosomal protein bL32 family.</text>
</comment>
<proteinExistence type="inferred from homology"/>
<keyword id="KW-1185">Reference proteome</keyword>
<keyword id="KW-0687">Ribonucleoprotein</keyword>
<keyword id="KW-0689">Ribosomal protein</keyword>
<accession>Q5WFF4</accession>
<protein>
    <recommendedName>
        <fullName evidence="1">Large ribosomal subunit protein bL32</fullName>
    </recommendedName>
    <alternativeName>
        <fullName evidence="2">50S ribosomal protein L32</fullName>
    </alternativeName>
</protein>
<feature type="chain" id="PRO_0000225702" description="Large ribosomal subunit protein bL32">
    <location>
        <begin position="1"/>
        <end position="57"/>
    </location>
</feature>
<organism>
    <name type="scientific">Shouchella clausii (strain KSM-K16)</name>
    <name type="common">Alkalihalobacillus clausii</name>
    <dbReference type="NCBI Taxonomy" id="66692"/>
    <lineage>
        <taxon>Bacteria</taxon>
        <taxon>Bacillati</taxon>
        <taxon>Bacillota</taxon>
        <taxon>Bacilli</taxon>
        <taxon>Bacillales</taxon>
        <taxon>Bacillaceae</taxon>
        <taxon>Shouchella</taxon>
    </lineage>
</organism>
<dbReference type="EMBL" id="AP006627">
    <property type="protein sequence ID" value="BAD64906.1"/>
    <property type="molecule type" value="Genomic_DNA"/>
</dbReference>
<dbReference type="RefSeq" id="WP_011247214.1">
    <property type="nucleotide sequence ID" value="NC_006582.1"/>
</dbReference>
<dbReference type="SMR" id="Q5WFF4"/>
<dbReference type="STRING" id="66692.ABC2371"/>
<dbReference type="GeneID" id="86926535"/>
<dbReference type="KEGG" id="bcl:ABC2371"/>
<dbReference type="eggNOG" id="COG0333">
    <property type="taxonomic scope" value="Bacteria"/>
</dbReference>
<dbReference type="HOGENOM" id="CLU_129084_1_3_9"/>
<dbReference type="OrthoDB" id="9812874at2"/>
<dbReference type="Proteomes" id="UP000001168">
    <property type="component" value="Chromosome"/>
</dbReference>
<dbReference type="GO" id="GO:0015934">
    <property type="term" value="C:large ribosomal subunit"/>
    <property type="evidence" value="ECO:0007669"/>
    <property type="project" value="InterPro"/>
</dbReference>
<dbReference type="GO" id="GO:0003735">
    <property type="term" value="F:structural constituent of ribosome"/>
    <property type="evidence" value="ECO:0007669"/>
    <property type="project" value="InterPro"/>
</dbReference>
<dbReference type="GO" id="GO:0006412">
    <property type="term" value="P:translation"/>
    <property type="evidence" value="ECO:0007669"/>
    <property type="project" value="UniProtKB-UniRule"/>
</dbReference>
<dbReference type="HAMAP" id="MF_00340">
    <property type="entry name" value="Ribosomal_bL32"/>
    <property type="match status" value="1"/>
</dbReference>
<dbReference type="InterPro" id="IPR002677">
    <property type="entry name" value="Ribosomal_bL32"/>
</dbReference>
<dbReference type="InterPro" id="IPR044957">
    <property type="entry name" value="Ribosomal_bL32_bact"/>
</dbReference>
<dbReference type="InterPro" id="IPR011332">
    <property type="entry name" value="Ribosomal_zn-bd"/>
</dbReference>
<dbReference type="NCBIfam" id="TIGR01031">
    <property type="entry name" value="rpmF_bact"/>
    <property type="match status" value="1"/>
</dbReference>
<dbReference type="PANTHER" id="PTHR35534">
    <property type="entry name" value="50S RIBOSOMAL PROTEIN L32"/>
    <property type="match status" value="1"/>
</dbReference>
<dbReference type="PANTHER" id="PTHR35534:SF2">
    <property type="entry name" value="LARGE RIBOSOMAL SUBUNIT PROTEIN BL32"/>
    <property type="match status" value="1"/>
</dbReference>
<dbReference type="Pfam" id="PF01783">
    <property type="entry name" value="Ribosomal_L32p"/>
    <property type="match status" value="1"/>
</dbReference>
<dbReference type="SUPFAM" id="SSF57829">
    <property type="entry name" value="Zn-binding ribosomal proteins"/>
    <property type="match status" value="1"/>
</dbReference>
<sequence length="57" mass="6559">MAVPFRRTSKTRKNKRRTHFKLEVPGMVECPECGEYKLSHRVCKACGTYKGEKVASK</sequence>
<reference key="1">
    <citation type="submission" date="2003-10" db="EMBL/GenBank/DDBJ databases">
        <title>The complete genome sequence of the alkaliphilic Bacillus clausii KSM-K16.</title>
        <authorList>
            <person name="Takaki Y."/>
            <person name="Kageyama Y."/>
            <person name="Shimamura S."/>
            <person name="Suzuki H."/>
            <person name="Nishi S."/>
            <person name="Hatada Y."/>
            <person name="Kawai S."/>
            <person name="Ito S."/>
            <person name="Horikoshi K."/>
        </authorList>
    </citation>
    <scope>NUCLEOTIDE SEQUENCE [LARGE SCALE GENOMIC DNA]</scope>
    <source>
        <strain>KSM-K16</strain>
    </source>
</reference>
<name>RL32_SHOC1</name>